<proteinExistence type="inferred from homology"/>
<sequence length="337" mass="37373">MKKWLFPFAFVATLAGCSVSNESKQQANDTYQKSDAALPLFAPLNTAGVSLPKQDTTYQLPQVKVKKADQVDIRPPETPLAIIQNSIAQFDGERALIAYPIDKREVYNLQQVARLLKEQGIGYQLTNEKIVTDWAPTGRADEIGDTQVRYEIEQVSSGNYSALFVSILQMKRNEVVFSPHLADKQRYSSDRLNQLVGELDASYRKQVRDLNNSGLMPIQSVLGTDSNGRTALVLGAPFNHAWTKLGQVLPQLEFDIKDEIIGRGVRELKYRPAGAKSWWWPFGRAEGSSGLKTGTYFMQLSALGKQSAVVMTDDDGNALSGEQAQALYQALQNLLAK</sequence>
<dbReference type="EMBL" id="AE004439">
    <property type="protein sequence ID" value="AAK03134.1"/>
    <property type="molecule type" value="Genomic_DNA"/>
</dbReference>
<dbReference type="RefSeq" id="WP_005723194.1">
    <property type="nucleotide sequence ID" value="NC_002663.1"/>
</dbReference>
<dbReference type="SMR" id="Q9CLZ8"/>
<dbReference type="STRING" id="272843.PM1050"/>
<dbReference type="EnsemblBacteria" id="AAK03134">
    <property type="protein sequence ID" value="AAK03134"/>
    <property type="gene ID" value="PM1050"/>
</dbReference>
<dbReference type="KEGG" id="pmu:PM1050"/>
<dbReference type="PATRIC" id="fig|272843.6.peg.1064"/>
<dbReference type="HOGENOM" id="CLU_830636_0_0_6"/>
<dbReference type="OrthoDB" id="5686855at2"/>
<dbReference type="Proteomes" id="UP000000809">
    <property type="component" value="Chromosome"/>
</dbReference>
<dbReference type="GO" id="GO:0009279">
    <property type="term" value="C:cell outer membrane"/>
    <property type="evidence" value="ECO:0007669"/>
    <property type="project" value="UniProtKB-SubCell"/>
</dbReference>
<dbReference type="GO" id="GO:0043165">
    <property type="term" value="P:Gram-negative-bacterium-type cell outer membrane assembly"/>
    <property type="evidence" value="ECO:0007669"/>
    <property type="project" value="UniProtKB-UniRule"/>
</dbReference>
<dbReference type="GO" id="GO:0051205">
    <property type="term" value="P:protein insertion into membrane"/>
    <property type="evidence" value="ECO:0007669"/>
    <property type="project" value="UniProtKB-UniRule"/>
</dbReference>
<dbReference type="Gene3D" id="3.30.530.50">
    <property type="match status" value="1"/>
</dbReference>
<dbReference type="Gene3D" id="3.30.310.170">
    <property type="entry name" value="Outer membrane protein assembly factor BamC"/>
    <property type="match status" value="1"/>
</dbReference>
<dbReference type="HAMAP" id="MF_00924">
    <property type="entry name" value="OM_assembly_BamC"/>
    <property type="match status" value="1"/>
</dbReference>
<dbReference type="InterPro" id="IPR014524">
    <property type="entry name" value="BamC"/>
</dbReference>
<dbReference type="InterPro" id="IPR042268">
    <property type="entry name" value="BamC_C"/>
</dbReference>
<dbReference type="InterPro" id="IPR010653">
    <property type="entry name" value="NlpB/DapX"/>
</dbReference>
<dbReference type="Pfam" id="PF06804">
    <property type="entry name" value="Lipoprotein_18"/>
    <property type="match status" value="1"/>
</dbReference>
<dbReference type="PIRSF" id="PIRSF026343">
    <property type="entry name" value="NlpB"/>
    <property type="match status" value="1"/>
</dbReference>
<dbReference type="PROSITE" id="PS51257">
    <property type="entry name" value="PROKAR_LIPOPROTEIN"/>
    <property type="match status" value="1"/>
</dbReference>
<name>BAMC_PASMU</name>
<gene>
    <name evidence="1" type="primary">bamC</name>
    <name type="ordered locus">PM1050</name>
</gene>
<organism>
    <name type="scientific">Pasteurella multocida (strain Pm70)</name>
    <dbReference type="NCBI Taxonomy" id="272843"/>
    <lineage>
        <taxon>Bacteria</taxon>
        <taxon>Pseudomonadati</taxon>
        <taxon>Pseudomonadota</taxon>
        <taxon>Gammaproteobacteria</taxon>
        <taxon>Pasteurellales</taxon>
        <taxon>Pasteurellaceae</taxon>
        <taxon>Pasteurella</taxon>
    </lineage>
</organism>
<feature type="signal peptide" evidence="1">
    <location>
        <begin position="1"/>
        <end position="16"/>
    </location>
</feature>
<feature type="chain" id="PRO_0000417820" description="Outer membrane protein assembly factor BamC">
    <location>
        <begin position="17"/>
        <end position="337"/>
    </location>
</feature>
<feature type="lipid moiety-binding region" description="N-palmitoyl cysteine" evidence="1">
    <location>
        <position position="17"/>
    </location>
</feature>
<feature type="lipid moiety-binding region" description="S-diacylglycerol cysteine" evidence="1">
    <location>
        <position position="17"/>
    </location>
</feature>
<reference key="1">
    <citation type="journal article" date="2001" name="Proc. Natl. Acad. Sci. U.S.A.">
        <title>Complete genomic sequence of Pasteurella multocida Pm70.</title>
        <authorList>
            <person name="May B.J."/>
            <person name="Zhang Q."/>
            <person name="Li L.L."/>
            <person name="Paustian M.L."/>
            <person name="Whittam T.S."/>
            <person name="Kapur V."/>
        </authorList>
    </citation>
    <scope>NUCLEOTIDE SEQUENCE [LARGE SCALE GENOMIC DNA]</scope>
    <source>
        <strain>Pm70</strain>
    </source>
</reference>
<evidence type="ECO:0000255" key="1">
    <source>
        <dbReference type="HAMAP-Rule" id="MF_00924"/>
    </source>
</evidence>
<protein>
    <recommendedName>
        <fullName evidence="1">Outer membrane protein assembly factor BamC</fullName>
    </recommendedName>
</protein>
<keyword id="KW-0998">Cell outer membrane</keyword>
<keyword id="KW-0449">Lipoprotein</keyword>
<keyword id="KW-0472">Membrane</keyword>
<keyword id="KW-0564">Palmitate</keyword>
<keyword id="KW-1185">Reference proteome</keyword>
<keyword id="KW-0732">Signal</keyword>
<accession>Q9CLZ8</accession>
<comment type="function">
    <text evidence="1">Part of the outer membrane protein assembly complex, which is involved in assembly and insertion of beta-barrel proteins into the outer membrane.</text>
</comment>
<comment type="subunit">
    <text evidence="1">Part of the Bam complex.</text>
</comment>
<comment type="subcellular location">
    <subcellularLocation>
        <location evidence="1">Cell outer membrane</location>
        <topology evidence="1">Lipid-anchor</topology>
    </subcellularLocation>
</comment>
<comment type="similarity">
    <text evidence="1">Belongs to the BamC family.</text>
</comment>